<comment type="function">
    <text evidence="1">Involved in the naphthalene catabolic pathway. Catalyzes the meta-cleavage of 1,2-dihydroxynaphthalene (1,2-DHN) to yield 2-hydroxychromene-2-carboxylic acid (By similarity).</text>
</comment>
<comment type="catalytic activity">
    <reaction>
        <text>naphthalene-1,2-diol + O2 = 2-hydroxychromene-2-carboxylate + H(+)</text>
        <dbReference type="Rhea" id="RHEA:27310"/>
        <dbReference type="ChEBI" id="CHEBI:15378"/>
        <dbReference type="ChEBI" id="CHEBI:15379"/>
        <dbReference type="ChEBI" id="CHEBI:17435"/>
        <dbReference type="ChEBI" id="CHEBI:59350"/>
        <dbReference type="EC" id="1.13.11.56"/>
    </reaction>
</comment>
<comment type="cofactor">
    <cofactor evidence="3">
        <name>Fe(2+)</name>
        <dbReference type="ChEBI" id="CHEBI:29033"/>
    </cofactor>
</comment>
<comment type="pathway">
    <text>Aromatic compound metabolism; naphthalene degradation.</text>
</comment>
<comment type="miscellaneous">
    <text evidence="5">Encoded on an unnamed 75 kb plasmid.</text>
</comment>
<comment type="similarity">
    <text evidence="4">Belongs to the extradiol ring-cleavage dioxygenase family.</text>
</comment>
<feature type="chain" id="PRO_0000085023" description="1,2-dihydroxynaphthalene dioxygenase">
    <location>
        <begin position="1"/>
        <end position="302"/>
    </location>
</feature>
<feature type="domain" description="VOC 1" evidence="2">
    <location>
        <begin position="9"/>
        <end position="124"/>
    </location>
</feature>
<feature type="domain" description="VOC 2" evidence="2">
    <location>
        <begin position="149"/>
        <end position="270"/>
    </location>
</feature>
<feature type="binding site">
    <location>
        <position position="152"/>
    </location>
    <ligand>
        <name>Fe cation</name>
        <dbReference type="ChEBI" id="CHEBI:24875"/>
    </ligand>
</feature>
<feature type="binding site">
    <location>
        <position position="152"/>
    </location>
    <ligand>
        <name>substrate</name>
    </ligand>
</feature>
<feature type="binding site">
    <location>
        <begin position="199"/>
        <end position="200"/>
    </location>
    <ligand>
        <name>substrate</name>
    </ligand>
</feature>
<feature type="binding site">
    <location>
        <position position="215"/>
    </location>
    <ligand>
        <name>Fe cation</name>
        <dbReference type="ChEBI" id="CHEBI:24875"/>
    </ligand>
</feature>
<feature type="binding site">
    <location>
        <position position="215"/>
    </location>
    <ligand>
        <name>substrate</name>
    </ligand>
</feature>
<feature type="binding site">
    <location>
        <position position="256"/>
    </location>
    <ligand>
        <name>substrate</name>
    </ligand>
</feature>
<feature type="binding site">
    <location>
        <position position="266"/>
    </location>
    <ligand>
        <name>Fe cation</name>
        <dbReference type="ChEBI" id="CHEBI:24875"/>
    </ligand>
</feature>
<feature type="strand" evidence="6">
    <location>
        <begin position="7"/>
        <end position="16"/>
    </location>
</feature>
<feature type="helix" evidence="6">
    <location>
        <begin position="20"/>
        <end position="29"/>
    </location>
</feature>
<feature type="strand" evidence="6">
    <location>
        <begin position="34"/>
        <end position="36"/>
    </location>
</feature>
<feature type="strand" evidence="6">
    <location>
        <begin position="41"/>
        <end position="52"/>
    </location>
</feature>
<feature type="strand" evidence="6">
    <location>
        <begin position="54"/>
        <end position="60"/>
    </location>
</feature>
<feature type="strand" evidence="6">
    <location>
        <begin position="63"/>
        <end position="74"/>
    </location>
</feature>
<feature type="helix" evidence="6">
    <location>
        <begin position="75"/>
        <end position="87"/>
    </location>
</feature>
<feature type="helix" evidence="6">
    <location>
        <begin position="97"/>
        <end position="103"/>
    </location>
</feature>
<feature type="strand" evidence="6">
    <location>
        <begin position="105"/>
        <end position="112"/>
    </location>
</feature>
<feature type="strand" evidence="6">
    <location>
        <begin position="118"/>
        <end position="125"/>
    </location>
</feature>
<feature type="helix" evidence="6">
    <location>
        <begin position="146"/>
        <end position="148"/>
    </location>
</feature>
<feature type="strand" evidence="6">
    <location>
        <begin position="152"/>
        <end position="155"/>
    </location>
</feature>
<feature type="helix" evidence="6">
    <location>
        <begin position="160"/>
        <end position="169"/>
    </location>
</feature>
<feature type="strand" evidence="6">
    <location>
        <begin position="176"/>
        <end position="181"/>
    </location>
</feature>
<feature type="strand" evidence="6">
    <location>
        <begin position="187"/>
        <end position="199"/>
    </location>
</feature>
<feature type="strand" evidence="6">
    <location>
        <begin position="201"/>
        <end position="204"/>
    </location>
</feature>
<feature type="strand" evidence="6">
    <location>
        <begin position="210"/>
        <end position="222"/>
    </location>
</feature>
<feature type="helix" evidence="6">
    <location>
        <begin position="223"/>
        <end position="235"/>
    </location>
</feature>
<feature type="strand" evidence="6">
    <location>
        <begin position="240"/>
        <end position="246"/>
    </location>
</feature>
<feature type="turn" evidence="6">
    <location>
        <begin position="248"/>
        <end position="250"/>
    </location>
</feature>
<feature type="strand" evidence="6">
    <location>
        <begin position="253"/>
        <end position="258"/>
    </location>
</feature>
<feature type="strand" evidence="6">
    <location>
        <begin position="262"/>
        <end position="269"/>
    </location>
</feature>
<feature type="strand" evidence="6">
    <location>
        <begin position="281"/>
        <end position="283"/>
    </location>
</feature>
<feature type="strand" evidence="6">
    <location>
        <begin position="285"/>
        <end position="287"/>
    </location>
</feature>
<feature type="strand" evidence="6">
    <location>
        <begin position="294"/>
        <end position="296"/>
    </location>
</feature>
<keyword id="KW-0002">3D-structure</keyword>
<keyword id="KW-0058">Aromatic hydrocarbons catabolism</keyword>
<keyword id="KW-0223">Dioxygenase</keyword>
<keyword id="KW-0408">Iron</keyword>
<keyword id="KW-0479">Metal-binding</keyword>
<keyword id="KW-0560">Oxidoreductase</keyword>
<keyword id="KW-0614">Plasmid</keyword>
<keyword id="KW-0677">Repeat</keyword>
<geneLocation type="plasmid">
    <name>unnamed</name>
</geneLocation>
<reference key="1">
    <citation type="journal article" date="1993" name="J. Bacteriol.">
        <title>Metabolism of dibenzothiophene and naphthalene in Pseudomonas strains: complete DNA sequence of an upper naphthalene catabolic pathway.</title>
        <authorList>
            <person name="Denome S.A."/>
            <person name="Stanley D.C."/>
            <person name="Olson E.S."/>
            <person name="Young K.D."/>
        </authorList>
    </citation>
    <scope>NUCLEOTIDE SEQUENCE [GENOMIC DNA]</scope>
    <source>
        <strain>C18</strain>
        <plasmid>unnamed</plasmid>
    </source>
</reference>
<reference key="2">
    <citation type="submission" date="2007-03" db="PDB data bank">
        <title>Structural explanation for success and failure in the enzymatic ring-cleavage of 3,4 dihydroxybiphenyl and related PCB metabolites.</title>
        <authorList>
            <person name="Neau D.B."/>
            <person name="Kelker M.S."/>
            <person name="Maaroufi H."/>
            <person name="Colbert C.L."/>
            <person name="Eltis L.D."/>
            <person name="Bolin J.T."/>
        </authorList>
    </citation>
    <scope>X-RAY CRYSTALLOGRAPHY (1.35 ANGSTROMS) OF 1-302 IN COMPLEX WITH SUBSTRATE ANALOGS AND IRON ION</scope>
    <scope>COFACTOR</scope>
</reference>
<organism>
    <name type="scientific">Pseudomonas sp. (strain C18)</name>
    <dbReference type="NCBI Taxonomy" id="69011"/>
    <lineage>
        <taxon>Bacteria</taxon>
        <taxon>Pseudomonadati</taxon>
        <taxon>Pseudomonadota</taxon>
    </lineage>
</organism>
<proteinExistence type="evidence at protein level"/>
<sequence>MSKQAAVIELGYMGISVKDPDAWKSFATDMLGLQVLDEGEKDRFYLRMDYWHHRIVVHHNGQDDLEYLGWRVAGKPEFEALGQKLIDAGYKIRICDKVEAQERMVLGLMKTEDPGGNPTEIFWGPRIDMSNPFHPGRPLHGKFVTGDQGLGHCIVRQTDVAEAHKFYSLLGFRGDVEYRIPLPNGMTAELSFMHCNARDHSIAFGAMPAAKRLNHLMLEYTHMEDLGYTHQQFVKNEIDIALQLGIHANDKALTFYGATPSGWLIEPGWRGATAIDEAEYYVGDIFGHGVEATGYGLDVKLS</sequence>
<protein>
    <recommendedName>
        <fullName>1,2-dihydroxynaphthalene dioxygenase</fullName>
        <shortName>1,2-DHN dioxygenase</shortName>
        <shortName>DHNDO</shortName>
        <ecNumber>1.13.11.56</ecNumber>
    </recommendedName>
    <alternativeName>
        <fullName>1,2-dihydroxynaphthalene oxygenase</fullName>
    </alternativeName>
</protein>
<accession>P0A108</accession>
<accession>Q57145</accession>
<gene>
    <name type="primary">doxG</name>
</gene>
<evidence type="ECO:0000250" key="1"/>
<evidence type="ECO:0000255" key="2">
    <source>
        <dbReference type="PROSITE-ProRule" id="PRU01163"/>
    </source>
</evidence>
<evidence type="ECO:0000269" key="3">
    <source ref="2"/>
</evidence>
<evidence type="ECO:0000305" key="4"/>
<evidence type="ECO:0000305" key="5">
    <source>
    </source>
</evidence>
<evidence type="ECO:0007829" key="6">
    <source>
        <dbReference type="PDB" id="2EHZ"/>
    </source>
</evidence>
<dbReference type="EC" id="1.13.11.56"/>
<dbReference type="EMBL" id="M60405">
    <property type="protein sequence ID" value="AAA16130.1"/>
    <property type="molecule type" value="Genomic_DNA"/>
</dbReference>
<dbReference type="PDB" id="2EHZ">
    <property type="method" value="X-ray"/>
    <property type="resolution" value="1.35 A"/>
    <property type="chains" value="A=1-302"/>
</dbReference>
<dbReference type="PDB" id="2EI0">
    <property type="method" value="X-ray"/>
    <property type="resolution" value="1.60 A"/>
    <property type="chains" value="A=1-302"/>
</dbReference>
<dbReference type="PDB" id="2EI1">
    <property type="method" value="X-ray"/>
    <property type="resolution" value="1.52 A"/>
    <property type="chains" value="A=1-302"/>
</dbReference>
<dbReference type="PDB" id="2EI2">
    <property type="method" value="X-ray"/>
    <property type="resolution" value="1.69 A"/>
    <property type="chains" value="A=1-302"/>
</dbReference>
<dbReference type="PDB" id="2EI3">
    <property type="method" value="X-ray"/>
    <property type="resolution" value="1.90 A"/>
    <property type="chains" value="A=1-302"/>
</dbReference>
<dbReference type="PDBsum" id="2EHZ"/>
<dbReference type="PDBsum" id="2EI0"/>
<dbReference type="PDBsum" id="2EI1"/>
<dbReference type="PDBsum" id="2EI2"/>
<dbReference type="PDBsum" id="2EI3"/>
<dbReference type="SMR" id="P0A108"/>
<dbReference type="DrugBank" id="DB07610">
    <property type="generic name" value="1,2-Dihydroxynaphthalene"/>
</dbReference>
<dbReference type="DrugBank" id="DB07478">
    <property type="generic name" value="3,4-Biphenyldiol"/>
</dbReference>
<dbReference type="DrugBank" id="DB02923">
    <property type="generic name" value="Biphenyl-2,3-Diol"/>
</dbReference>
<dbReference type="UniPathway" id="UPA00082"/>
<dbReference type="EvolutionaryTrace" id="P0A108"/>
<dbReference type="GO" id="GO:0018554">
    <property type="term" value="F:1,2-dihydroxynaphthalene dioxygenase activity"/>
    <property type="evidence" value="ECO:0007669"/>
    <property type="project" value="UniProtKB-EC"/>
</dbReference>
<dbReference type="GO" id="GO:0008198">
    <property type="term" value="F:ferrous iron binding"/>
    <property type="evidence" value="ECO:0007669"/>
    <property type="project" value="InterPro"/>
</dbReference>
<dbReference type="GO" id="GO:0016702">
    <property type="term" value="F:oxidoreductase activity, acting on single donors with incorporation of molecular oxygen, incorporation of two atoms of oxygen"/>
    <property type="evidence" value="ECO:0000250"/>
    <property type="project" value="UniProtKB"/>
</dbReference>
<dbReference type="GO" id="GO:1901170">
    <property type="term" value="P:naphthalene catabolic process"/>
    <property type="evidence" value="ECO:0000250"/>
    <property type="project" value="UniProtKB"/>
</dbReference>
<dbReference type="CDD" id="cd07237">
    <property type="entry name" value="BphC1-RGP6_C_like"/>
    <property type="match status" value="1"/>
</dbReference>
<dbReference type="CDD" id="cd07252">
    <property type="entry name" value="BphC1-RGP6_N_like"/>
    <property type="match status" value="1"/>
</dbReference>
<dbReference type="FunFam" id="3.10.180.10:FF:000021">
    <property type="entry name" value="1,2-dihydroxynaphthalene dioxygenase"/>
    <property type="match status" value="1"/>
</dbReference>
<dbReference type="FunFam" id="3.10.180.10:FF:000027">
    <property type="entry name" value="1,2-dihydroxynaphthalene dioxygenase"/>
    <property type="match status" value="1"/>
</dbReference>
<dbReference type="Gene3D" id="3.10.180.10">
    <property type="entry name" value="2,3-Dihydroxybiphenyl 1,2-Dioxygenase, domain 1"/>
    <property type="match status" value="2"/>
</dbReference>
<dbReference type="InterPro" id="IPR029068">
    <property type="entry name" value="Glyas_Bleomycin-R_OHBP_Dase"/>
</dbReference>
<dbReference type="InterPro" id="IPR004360">
    <property type="entry name" value="Glyas_Fos-R_dOase_dom"/>
</dbReference>
<dbReference type="InterPro" id="IPR037523">
    <property type="entry name" value="VOC"/>
</dbReference>
<dbReference type="InterPro" id="IPR000486">
    <property type="entry name" value="Xdiol_ring_cleave_dOase_1/2"/>
</dbReference>
<dbReference type="Pfam" id="PF22632">
    <property type="entry name" value="BphC_D1"/>
    <property type="match status" value="1"/>
</dbReference>
<dbReference type="Pfam" id="PF00903">
    <property type="entry name" value="Glyoxalase"/>
    <property type="match status" value="1"/>
</dbReference>
<dbReference type="SUPFAM" id="SSF54593">
    <property type="entry name" value="Glyoxalase/Bleomycin resistance protein/Dihydroxybiphenyl dioxygenase"/>
    <property type="match status" value="1"/>
</dbReference>
<dbReference type="PROSITE" id="PS00082">
    <property type="entry name" value="EXTRADIOL_DIOXYGENAS"/>
    <property type="match status" value="1"/>
</dbReference>
<dbReference type="PROSITE" id="PS51819">
    <property type="entry name" value="VOC"/>
    <property type="match status" value="2"/>
</dbReference>
<name>NAHC_PSEU8</name>